<feature type="chain" id="PRO_0000379899" description="Putative nuclear shuttle protein">
    <location>
        <begin position="1"/>
        <end position="154"/>
    </location>
</feature>
<dbReference type="EMBL" id="L41577">
    <property type="protein sequence ID" value="AAA87370.1"/>
    <property type="molecule type" value="Genomic_DNA"/>
</dbReference>
<dbReference type="RefSeq" id="NP_604479.1">
    <property type="nucleotide sequence ID" value="NC_003476.1"/>
</dbReference>
<dbReference type="KEGG" id="vg:963869"/>
<dbReference type="Proteomes" id="UP000002339">
    <property type="component" value="Genome"/>
</dbReference>
<dbReference type="GO" id="GO:0030430">
    <property type="term" value="C:host cell cytoplasm"/>
    <property type="evidence" value="ECO:0007669"/>
    <property type="project" value="UniProtKB-SubCell"/>
</dbReference>
<dbReference type="GO" id="GO:0042025">
    <property type="term" value="C:host cell nucleus"/>
    <property type="evidence" value="ECO:0007669"/>
    <property type="project" value="UniProtKB-SubCell"/>
</dbReference>
<dbReference type="InterPro" id="IPR008706">
    <property type="entry name" value="Nanovirus_C8"/>
</dbReference>
<dbReference type="Pfam" id="PF05629">
    <property type="entry name" value="Nanovirus_C8"/>
    <property type="match status" value="1"/>
</dbReference>
<keyword id="KW-1035">Host cytoplasm</keyword>
<keyword id="KW-1048">Host nucleus</keyword>
<keyword id="KW-1185">Reference proteome</keyword>
<name>NSP_BBTVA</name>
<proteinExistence type="inferred from homology"/>
<evidence type="ECO:0000269" key="1">
    <source>
    </source>
</evidence>
<evidence type="ECO:0000305" key="2"/>
<organismHost>
    <name type="scientific">Musa</name>
    <dbReference type="NCBI Taxonomy" id="4640"/>
</organismHost>
<gene>
    <name type="primary">DNA-N</name>
    <name type="synonym">C6</name>
</gene>
<sequence>MDWAESQFKTCTHGCDWKKISSDSADNRQYVPCVDSGAGRKSPRKVLLRSIEAVFNGSFSGNNRNVRGFLYVSIRDDDGEMRPVLIVPFGGYGYHNDFYYFEGKGKVECDISSDYVAPGIDWSRDMEVSISNSNNCNELCDLKCYVVCSLRIKE</sequence>
<reference key="1">
    <citation type="journal article" date="1995" name="J. Gen. Virol.">
        <title>The genome organization of banana bunchy top virus: analysis of six ssDNA components.</title>
        <authorList>
            <person name="Burns T.M."/>
            <person name="Harding R.M."/>
            <person name="Dale J.L."/>
        </authorList>
    </citation>
    <scope>NUCLEOTIDE SEQUENCE [GENOMIC DNA]</scope>
</reference>
<reference key="2">
    <citation type="journal article" date="2000" name="J. Gen. Virol.">
        <title>Functional analysis of proteins encoded by banana bunchy top virus DNA-4 to -6.</title>
        <authorList>
            <person name="Wanitchakorn R."/>
            <person name="Hafner G.J."/>
            <person name="Harding R.M."/>
            <person name="Dale J.L."/>
        </authorList>
    </citation>
    <scope>SUBCELLULAR LOCATION</scope>
</reference>
<protein>
    <recommendedName>
        <fullName>Putative nuclear shuttle protein</fullName>
    </recommendedName>
</protein>
<comment type="function">
    <text>Putative nuclear shuttle protein.</text>
</comment>
<comment type="subcellular location">
    <subcellularLocation>
        <location evidence="1">Host nucleus</location>
    </subcellularLocation>
    <subcellularLocation>
        <location evidence="1">Host cytoplasm</location>
    </subcellularLocation>
</comment>
<comment type="similarity">
    <text evidence="2">Belongs to the nanoviridae nuclear shuttle protein family.</text>
</comment>
<accession>Q65388</accession>
<organism>
    <name type="scientific">Banana bunchy top virus (isolate Autralia)</name>
    <name type="common">BBTV</name>
    <dbReference type="NCBI Taxonomy" id="645099"/>
    <lineage>
        <taxon>Viruses</taxon>
        <taxon>Monodnaviria</taxon>
        <taxon>Shotokuvirae</taxon>
        <taxon>Cressdnaviricota</taxon>
        <taxon>Arfiviricetes</taxon>
        <taxon>Mulpavirales</taxon>
        <taxon>Nanoviridae</taxon>
        <taxon>Babuvirus</taxon>
        <taxon>Babuvirus musae</taxon>
        <taxon>Banana bunchy top virus</taxon>
    </lineage>
</organism>